<comment type="function">
    <text evidence="1">Transfers and isomerizes the ribose moiety from AdoMet to the 7-aminomethyl group of 7-deazaguanine (preQ1-tRNA) to give epoxyqueuosine (oQ-tRNA).</text>
</comment>
<comment type="catalytic activity">
    <reaction evidence="1">
        <text>7-aminomethyl-7-carbaguanosine(34) in tRNA + S-adenosyl-L-methionine = epoxyqueuosine(34) in tRNA + adenine + L-methionine + 2 H(+)</text>
        <dbReference type="Rhea" id="RHEA:32155"/>
        <dbReference type="Rhea" id="RHEA-COMP:10342"/>
        <dbReference type="Rhea" id="RHEA-COMP:18582"/>
        <dbReference type="ChEBI" id="CHEBI:15378"/>
        <dbReference type="ChEBI" id="CHEBI:16708"/>
        <dbReference type="ChEBI" id="CHEBI:57844"/>
        <dbReference type="ChEBI" id="CHEBI:59789"/>
        <dbReference type="ChEBI" id="CHEBI:82833"/>
        <dbReference type="ChEBI" id="CHEBI:194443"/>
        <dbReference type="EC" id="2.4.99.17"/>
    </reaction>
</comment>
<comment type="pathway">
    <text evidence="1">tRNA modification; tRNA-queuosine biosynthesis.</text>
</comment>
<comment type="subunit">
    <text evidence="1">Monomer.</text>
</comment>
<comment type="subcellular location">
    <subcellularLocation>
        <location evidence="1">Cytoplasm</location>
    </subcellularLocation>
</comment>
<comment type="similarity">
    <text evidence="1">Belongs to the QueA family.</text>
</comment>
<gene>
    <name evidence="1" type="primary">queA</name>
    <name type="ordered locus">Rxyl_1329</name>
</gene>
<evidence type="ECO:0000255" key="1">
    <source>
        <dbReference type="HAMAP-Rule" id="MF_00113"/>
    </source>
</evidence>
<keyword id="KW-0963">Cytoplasm</keyword>
<keyword id="KW-0671">Queuosine biosynthesis</keyword>
<keyword id="KW-1185">Reference proteome</keyword>
<keyword id="KW-0949">S-adenosyl-L-methionine</keyword>
<keyword id="KW-0808">Transferase</keyword>
<feature type="chain" id="PRO_1000015265" description="S-adenosylmethionine:tRNA ribosyltransferase-isomerase">
    <location>
        <begin position="1"/>
        <end position="334"/>
    </location>
</feature>
<sequence length="334" mass="37265">MRTDELDYELPQELIAQRPAEPRDASRLMVVDVPSRGISHHVFRELPRFLGPGDVLVLNETKVIPARLFASRPGGGEVELLFLGERGGAWEALARPSRRLRPGMPLSAGEGERLEVVEELGEGRWLVRGRDVPGLLERAGRMPLPPYIEPTPEAEASYQTVYARTPGSAAAPTAGFHFTGRVLRGVEEAGARIARVVLHVGLGTFAPVREERLEDHRMHREYYAVPEETARAVEEAERVVAVGTTVVRTLESWARSGVREGESELFIYPGYEWRAVDALITNFHLPRSTLLALVMSFAGRELVREAYEVAVRERYRFYSFGDAMLLLGGGRSLR</sequence>
<name>QUEA_RUBXD</name>
<proteinExistence type="inferred from homology"/>
<protein>
    <recommendedName>
        <fullName evidence="1">S-adenosylmethionine:tRNA ribosyltransferase-isomerase</fullName>
        <ecNumber evidence="1">2.4.99.17</ecNumber>
    </recommendedName>
    <alternativeName>
        <fullName evidence="1">Queuosine biosynthesis protein QueA</fullName>
    </alternativeName>
</protein>
<organism>
    <name type="scientific">Rubrobacter xylanophilus (strain DSM 9941 / JCM 11954 / NBRC 16129 / PRD-1)</name>
    <dbReference type="NCBI Taxonomy" id="266117"/>
    <lineage>
        <taxon>Bacteria</taxon>
        <taxon>Bacillati</taxon>
        <taxon>Actinomycetota</taxon>
        <taxon>Rubrobacteria</taxon>
        <taxon>Rubrobacterales</taxon>
        <taxon>Rubrobacteraceae</taxon>
        <taxon>Rubrobacter</taxon>
    </lineage>
</organism>
<accession>Q1AWD5</accession>
<reference key="1">
    <citation type="submission" date="2006-06" db="EMBL/GenBank/DDBJ databases">
        <title>Complete sequence of Rubrobacter xylanophilus DSM 9941.</title>
        <authorList>
            <consortium name="US DOE Joint Genome Institute"/>
            <person name="Copeland A."/>
            <person name="Lucas S."/>
            <person name="Lapidus A."/>
            <person name="Barry K."/>
            <person name="Detter J.C."/>
            <person name="Glavina del Rio T."/>
            <person name="Hammon N."/>
            <person name="Israni S."/>
            <person name="Dalin E."/>
            <person name="Tice H."/>
            <person name="Pitluck S."/>
            <person name="Munk A.C."/>
            <person name="Brettin T."/>
            <person name="Bruce D."/>
            <person name="Han C."/>
            <person name="Tapia R."/>
            <person name="Gilna P."/>
            <person name="Schmutz J."/>
            <person name="Larimer F."/>
            <person name="Land M."/>
            <person name="Hauser L."/>
            <person name="Kyrpides N."/>
            <person name="Lykidis A."/>
            <person name="da Costa M.S."/>
            <person name="Rainey F.A."/>
            <person name="Empadinhas N."/>
            <person name="Jolivet E."/>
            <person name="Battista J.R."/>
            <person name="Richardson P."/>
        </authorList>
    </citation>
    <scope>NUCLEOTIDE SEQUENCE [LARGE SCALE GENOMIC DNA]</scope>
    <source>
        <strain>DSM 9941 / JCM 11954 / NBRC 16129 / PRD-1</strain>
    </source>
</reference>
<dbReference type="EC" id="2.4.99.17" evidence="1"/>
<dbReference type="EMBL" id="CP000386">
    <property type="protein sequence ID" value="ABG04293.1"/>
    <property type="molecule type" value="Genomic_DNA"/>
</dbReference>
<dbReference type="RefSeq" id="WP_011564310.1">
    <property type="nucleotide sequence ID" value="NC_008148.1"/>
</dbReference>
<dbReference type="SMR" id="Q1AWD5"/>
<dbReference type="STRING" id="266117.Rxyl_1329"/>
<dbReference type="KEGG" id="rxy:Rxyl_1329"/>
<dbReference type="eggNOG" id="COG0809">
    <property type="taxonomic scope" value="Bacteria"/>
</dbReference>
<dbReference type="HOGENOM" id="CLU_039110_1_0_11"/>
<dbReference type="OrthoDB" id="9783887at2"/>
<dbReference type="PhylomeDB" id="Q1AWD5"/>
<dbReference type="UniPathway" id="UPA00392"/>
<dbReference type="Proteomes" id="UP000006637">
    <property type="component" value="Chromosome"/>
</dbReference>
<dbReference type="GO" id="GO:0005737">
    <property type="term" value="C:cytoplasm"/>
    <property type="evidence" value="ECO:0007669"/>
    <property type="project" value="UniProtKB-SubCell"/>
</dbReference>
<dbReference type="GO" id="GO:0051075">
    <property type="term" value="F:S-adenosylmethionine:tRNA ribosyltransferase-isomerase activity"/>
    <property type="evidence" value="ECO:0007669"/>
    <property type="project" value="UniProtKB-EC"/>
</dbReference>
<dbReference type="GO" id="GO:0008616">
    <property type="term" value="P:queuosine biosynthetic process"/>
    <property type="evidence" value="ECO:0007669"/>
    <property type="project" value="UniProtKB-UniRule"/>
</dbReference>
<dbReference type="GO" id="GO:0002099">
    <property type="term" value="P:tRNA wobble guanine modification"/>
    <property type="evidence" value="ECO:0007669"/>
    <property type="project" value="TreeGrafter"/>
</dbReference>
<dbReference type="Gene3D" id="2.40.10.240">
    <property type="entry name" value="QueA-like"/>
    <property type="match status" value="1"/>
</dbReference>
<dbReference type="Gene3D" id="3.40.1780.10">
    <property type="entry name" value="QueA-like"/>
    <property type="match status" value="2"/>
</dbReference>
<dbReference type="HAMAP" id="MF_00113">
    <property type="entry name" value="QueA"/>
    <property type="match status" value="1"/>
</dbReference>
<dbReference type="InterPro" id="IPR003699">
    <property type="entry name" value="QueA"/>
</dbReference>
<dbReference type="InterPro" id="IPR042118">
    <property type="entry name" value="QueA_dom1"/>
</dbReference>
<dbReference type="InterPro" id="IPR042119">
    <property type="entry name" value="QueA_dom2"/>
</dbReference>
<dbReference type="InterPro" id="IPR036100">
    <property type="entry name" value="QueA_sf"/>
</dbReference>
<dbReference type="NCBIfam" id="NF001140">
    <property type="entry name" value="PRK00147.1"/>
    <property type="match status" value="1"/>
</dbReference>
<dbReference type="NCBIfam" id="TIGR00113">
    <property type="entry name" value="queA"/>
    <property type="match status" value="1"/>
</dbReference>
<dbReference type="PANTHER" id="PTHR30307">
    <property type="entry name" value="S-ADENOSYLMETHIONINE:TRNA RIBOSYLTRANSFERASE-ISOMERASE"/>
    <property type="match status" value="1"/>
</dbReference>
<dbReference type="PANTHER" id="PTHR30307:SF0">
    <property type="entry name" value="S-ADENOSYLMETHIONINE:TRNA RIBOSYLTRANSFERASE-ISOMERASE"/>
    <property type="match status" value="1"/>
</dbReference>
<dbReference type="Pfam" id="PF02547">
    <property type="entry name" value="Queuosine_synth"/>
    <property type="match status" value="1"/>
</dbReference>
<dbReference type="SUPFAM" id="SSF111337">
    <property type="entry name" value="QueA-like"/>
    <property type="match status" value="1"/>
</dbReference>